<accession>Q475N9</accession>
<proteinExistence type="inferred from homology"/>
<dbReference type="EC" id="3.1.-.-" evidence="1"/>
<dbReference type="EMBL" id="CP000090">
    <property type="protein sequence ID" value="AAZ59894.1"/>
    <property type="status" value="ALT_INIT"/>
    <property type="molecule type" value="Genomic_DNA"/>
</dbReference>
<dbReference type="SMR" id="Q475N9"/>
<dbReference type="STRING" id="264198.Reut_A0512"/>
<dbReference type="KEGG" id="reu:Reut_A0512"/>
<dbReference type="eggNOG" id="COG0319">
    <property type="taxonomic scope" value="Bacteria"/>
</dbReference>
<dbReference type="HOGENOM" id="CLU_1118710_0_0_4"/>
<dbReference type="GO" id="GO:0005737">
    <property type="term" value="C:cytoplasm"/>
    <property type="evidence" value="ECO:0007669"/>
    <property type="project" value="UniProtKB-SubCell"/>
</dbReference>
<dbReference type="GO" id="GO:0004222">
    <property type="term" value="F:metalloendopeptidase activity"/>
    <property type="evidence" value="ECO:0007669"/>
    <property type="project" value="InterPro"/>
</dbReference>
<dbReference type="GO" id="GO:0004521">
    <property type="term" value="F:RNA endonuclease activity"/>
    <property type="evidence" value="ECO:0007669"/>
    <property type="project" value="UniProtKB-UniRule"/>
</dbReference>
<dbReference type="GO" id="GO:0008270">
    <property type="term" value="F:zinc ion binding"/>
    <property type="evidence" value="ECO:0007669"/>
    <property type="project" value="UniProtKB-UniRule"/>
</dbReference>
<dbReference type="GO" id="GO:0006364">
    <property type="term" value="P:rRNA processing"/>
    <property type="evidence" value="ECO:0007669"/>
    <property type="project" value="UniProtKB-UniRule"/>
</dbReference>
<dbReference type="Gene3D" id="3.40.390.30">
    <property type="entry name" value="Metalloproteases ('zincins'), catalytic domain"/>
    <property type="match status" value="1"/>
</dbReference>
<dbReference type="HAMAP" id="MF_00009">
    <property type="entry name" value="Endoribonucl_YbeY"/>
    <property type="match status" value="1"/>
</dbReference>
<dbReference type="InterPro" id="IPR023091">
    <property type="entry name" value="MetalPrtase_cat_dom_sf_prd"/>
</dbReference>
<dbReference type="InterPro" id="IPR002036">
    <property type="entry name" value="YbeY"/>
</dbReference>
<dbReference type="InterPro" id="IPR020549">
    <property type="entry name" value="YbeY_CS"/>
</dbReference>
<dbReference type="NCBIfam" id="NF010570">
    <property type="entry name" value="PRK13963.1"/>
    <property type="match status" value="1"/>
</dbReference>
<dbReference type="NCBIfam" id="TIGR00043">
    <property type="entry name" value="rRNA maturation RNase YbeY"/>
    <property type="match status" value="1"/>
</dbReference>
<dbReference type="PANTHER" id="PTHR46986">
    <property type="entry name" value="ENDORIBONUCLEASE YBEY, CHLOROPLASTIC"/>
    <property type="match status" value="1"/>
</dbReference>
<dbReference type="PANTHER" id="PTHR46986:SF1">
    <property type="entry name" value="ENDORIBONUCLEASE YBEY, CHLOROPLASTIC"/>
    <property type="match status" value="1"/>
</dbReference>
<dbReference type="Pfam" id="PF02130">
    <property type="entry name" value="YbeY"/>
    <property type="match status" value="1"/>
</dbReference>
<dbReference type="SUPFAM" id="SSF55486">
    <property type="entry name" value="Metalloproteases ('zincins'), catalytic domain"/>
    <property type="match status" value="1"/>
</dbReference>
<dbReference type="PROSITE" id="PS01306">
    <property type="entry name" value="UPF0054"/>
    <property type="match status" value="1"/>
</dbReference>
<comment type="function">
    <text evidence="1">Single strand-specific metallo-endoribonuclease involved in late-stage 70S ribosome quality control and in maturation of the 3' terminus of the 16S rRNA.</text>
</comment>
<comment type="cofactor">
    <cofactor evidence="1">
        <name>Zn(2+)</name>
        <dbReference type="ChEBI" id="CHEBI:29105"/>
    </cofactor>
    <text evidence="1">Binds 1 zinc ion.</text>
</comment>
<comment type="subcellular location">
    <subcellularLocation>
        <location evidence="1">Cytoplasm</location>
    </subcellularLocation>
</comment>
<comment type="similarity">
    <text evidence="1">Belongs to the endoribonuclease YbeY family.</text>
</comment>
<comment type="sequence caution" evidence="2">
    <conflict type="erroneous initiation">
        <sequence resource="EMBL-CDS" id="AAZ59894"/>
    </conflict>
</comment>
<evidence type="ECO:0000255" key="1">
    <source>
        <dbReference type="HAMAP-Rule" id="MF_00009"/>
    </source>
</evidence>
<evidence type="ECO:0000305" key="2"/>
<feature type="chain" id="PRO_0000284285" description="Endoribonuclease YbeY">
    <location>
        <begin position="1"/>
        <end position="201"/>
    </location>
</feature>
<feature type="binding site" evidence="1">
    <location>
        <position position="156"/>
    </location>
    <ligand>
        <name>Zn(2+)</name>
        <dbReference type="ChEBI" id="CHEBI:29105"/>
        <note>catalytic</note>
    </ligand>
</feature>
<feature type="binding site" evidence="1">
    <location>
        <position position="160"/>
    </location>
    <ligand>
        <name>Zn(2+)</name>
        <dbReference type="ChEBI" id="CHEBI:29105"/>
        <note>catalytic</note>
    </ligand>
</feature>
<feature type="binding site" evidence="1">
    <location>
        <position position="166"/>
    </location>
    <ligand>
        <name>Zn(2+)</name>
        <dbReference type="ChEBI" id="CHEBI:29105"/>
        <note>catalytic</note>
    </ligand>
</feature>
<gene>
    <name evidence="1" type="primary">ybeY</name>
    <name type="ordered locus">Reut_A0512</name>
</gene>
<organism>
    <name type="scientific">Cupriavidus pinatubonensis (strain JMP 134 / LMG 1197)</name>
    <name type="common">Cupriavidus necator (strain JMP 134)</name>
    <dbReference type="NCBI Taxonomy" id="264198"/>
    <lineage>
        <taxon>Bacteria</taxon>
        <taxon>Pseudomonadati</taxon>
        <taxon>Pseudomonadota</taxon>
        <taxon>Betaproteobacteria</taxon>
        <taxon>Burkholderiales</taxon>
        <taxon>Burkholderiaceae</taxon>
        <taxon>Cupriavidus</taxon>
    </lineage>
</organism>
<sequence>MVALLAEHTDTRQQAGLLVRPDNHDALSVAVTATPVVTTTGTPATPPALELDVQQGDGIGKRAGLPSRKQIETWVTSALYADAALTVRFVDEEEGRALNRSYRGKDYATNVLTFAYAESEDDPVTGDIVLCCPVVETEAREQRKPLEAHYAHLIVHGVLHAQGYEHEDDAEAEEMEAIETETLQALGFEDPYRDDHTPVAH</sequence>
<keyword id="KW-0963">Cytoplasm</keyword>
<keyword id="KW-0255">Endonuclease</keyword>
<keyword id="KW-0378">Hydrolase</keyword>
<keyword id="KW-0479">Metal-binding</keyword>
<keyword id="KW-0540">Nuclease</keyword>
<keyword id="KW-0690">Ribosome biogenesis</keyword>
<keyword id="KW-0698">rRNA processing</keyword>
<keyword id="KW-0862">Zinc</keyword>
<protein>
    <recommendedName>
        <fullName evidence="1">Endoribonuclease YbeY</fullName>
        <ecNumber evidence="1">3.1.-.-</ecNumber>
    </recommendedName>
</protein>
<name>YBEY_CUPPJ</name>
<reference key="1">
    <citation type="journal article" date="2010" name="PLoS ONE">
        <title>The complete multipartite genome sequence of Cupriavidus necator JMP134, a versatile pollutant degrader.</title>
        <authorList>
            <person name="Lykidis A."/>
            <person name="Perez-Pantoja D."/>
            <person name="Ledger T."/>
            <person name="Mavromatis K."/>
            <person name="Anderson I.J."/>
            <person name="Ivanova N.N."/>
            <person name="Hooper S.D."/>
            <person name="Lapidus A."/>
            <person name="Lucas S."/>
            <person name="Gonzalez B."/>
            <person name="Kyrpides N.C."/>
        </authorList>
    </citation>
    <scope>NUCLEOTIDE SEQUENCE [LARGE SCALE GENOMIC DNA]</scope>
    <source>
        <strain>JMP134 / LMG 1197</strain>
    </source>
</reference>